<name>DUT_EHV2</name>
<feature type="chain" id="PRO_0000406053" description="Deoxyuridine 5'-triphosphate nucleotidohydrolase">
    <location>
        <begin position="1"/>
        <end position="289"/>
    </location>
</feature>
<feature type="binding site" evidence="1">
    <location>
        <begin position="176"/>
        <end position="178"/>
    </location>
    <ligand>
        <name>substrate</name>
    </ligand>
</feature>
<feature type="binding site" evidence="1">
    <location>
        <begin position="283"/>
        <end position="284"/>
    </location>
    <ligand>
        <name>substrate</name>
    </ligand>
</feature>
<gene>
    <name evidence="1" type="primary">DUT</name>
    <name type="ordered locus">54</name>
</gene>
<comment type="function">
    <text evidence="1">Involved in nucleotide metabolism: produces dUMP, the immediate precursor of thymidine nucleotides and decreases the intracellular concentration of dUTP to avoid uracil incorporation into viral DNA.</text>
</comment>
<comment type="catalytic activity">
    <reaction evidence="1">
        <text>dUTP + H2O = dUMP + diphosphate + H(+)</text>
        <dbReference type="Rhea" id="RHEA:10248"/>
        <dbReference type="ChEBI" id="CHEBI:15377"/>
        <dbReference type="ChEBI" id="CHEBI:15378"/>
        <dbReference type="ChEBI" id="CHEBI:33019"/>
        <dbReference type="ChEBI" id="CHEBI:61555"/>
        <dbReference type="ChEBI" id="CHEBI:246422"/>
        <dbReference type="EC" id="3.6.1.23"/>
    </reaction>
</comment>
<comment type="cofactor">
    <cofactor evidence="1">
        <name>Mg(2+)</name>
        <dbReference type="ChEBI" id="CHEBI:18420"/>
    </cofactor>
</comment>
<comment type="similarity">
    <text evidence="1">Belongs to the dUTPase family.</text>
</comment>
<accession>Q66656</accession>
<protein>
    <recommendedName>
        <fullName evidence="1">Deoxyuridine 5'-triphosphate nucleotidohydrolase</fullName>
        <shortName evidence="1">dUTPase</shortName>
        <ecNumber evidence="1">3.6.1.23</ecNumber>
    </recommendedName>
    <alternativeName>
        <fullName evidence="1">dUTP pyrophosphatase</fullName>
    </alternativeName>
</protein>
<sequence length="289" mass="32958">MTLRKQRQEIYYEFTSSSFEITSPPESSKITLTNLYPILVRPYVPAVIPLGIRIIYGNKGQGFILAGSSQKKVFCHTGLIDPGYRGEIKLIVLNTTKYNVTLFAGELRVSLFSFFFSTPIIYDYDLLNRPQYSDDAGYDLYLQEDLMLFPQASTTVTIDSRVPTTTKFFKPVVFGRSGLATRGVVVDVVKWTHSPLTLKIYNFTDNTLRYSAGTRICQVVFVHRRHFPSKLKHFFTYINLNSKTSFYWANVSFVDCQNDAYRSLVTLPCQEDTDRGYRGDSGFGSSGMR</sequence>
<keyword id="KW-0378">Hydrolase</keyword>
<keyword id="KW-0460">Magnesium</keyword>
<keyword id="KW-0479">Metal-binding</keyword>
<keyword id="KW-0546">Nucleotide metabolism</keyword>
<keyword id="KW-1185">Reference proteome</keyword>
<dbReference type="EC" id="3.6.1.23" evidence="1"/>
<dbReference type="EMBL" id="U20824">
    <property type="protein sequence ID" value="AAC13842.1"/>
    <property type="molecule type" value="Genomic_DNA"/>
</dbReference>
<dbReference type="PIR" id="S55649">
    <property type="entry name" value="S55649"/>
</dbReference>
<dbReference type="SMR" id="Q66656"/>
<dbReference type="KEGG" id="vg:1461064"/>
<dbReference type="Proteomes" id="UP000007083">
    <property type="component" value="Segment"/>
</dbReference>
<dbReference type="GO" id="GO:0004170">
    <property type="term" value="F:dUTP diphosphatase activity"/>
    <property type="evidence" value="ECO:0007669"/>
    <property type="project" value="UniProtKB-EC"/>
</dbReference>
<dbReference type="GO" id="GO:0046872">
    <property type="term" value="F:metal ion binding"/>
    <property type="evidence" value="ECO:0007669"/>
    <property type="project" value="UniProtKB-KW"/>
</dbReference>
<dbReference type="GO" id="GO:0046080">
    <property type="term" value="P:dUTP metabolic process"/>
    <property type="evidence" value="ECO:0007669"/>
    <property type="project" value="InterPro"/>
</dbReference>
<dbReference type="Gene3D" id="2.70.40.10">
    <property type="match status" value="2"/>
</dbReference>
<dbReference type="HAMAP" id="MF_04031">
    <property type="entry name" value="HSV_DUT"/>
    <property type="match status" value="1"/>
</dbReference>
<dbReference type="InterPro" id="IPR029054">
    <property type="entry name" value="dUTPase-like"/>
</dbReference>
<dbReference type="InterPro" id="IPR036157">
    <property type="entry name" value="dUTPase-like_sf"/>
</dbReference>
<dbReference type="InterPro" id="IPR034745">
    <property type="entry name" value="HSV_DUT"/>
</dbReference>
<dbReference type="Pfam" id="PF00692">
    <property type="entry name" value="dUTPase"/>
    <property type="match status" value="2"/>
</dbReference>
<dbReference type="SUPFAM" id="SSF51283">
    <property type="entry name" value="dUTPase-like"/>
    <property type="match status" value="2"/>
</dbReference>
<organismHost>
    <name type="scientific">Equus caballus</name>
    <name type="common">Horse</name>
    <dbReference type="NCBI Taxonomy" id="9796"/>
</organismHost>
<evidence type="ECO:0000255" key="1">
    <source>
        <dbReference type="HAMAP-Rule" id="MF_04031"/>
    </source>
</evidence>
<organism>
    <name type="scientific">Equine herpesvirus 2 (strain 86/87)</name>
    <name type="common">EHV-2</name>
    <dbReference type="NCBI Taxonomy" id="82831"/>
    <lineage>
        <taxon>Viruses</taxon>
        <taxon>Duplodnaviria</taxon>
        <taxon>Heunggongvirae</taxon>
        <taxon>Peploviricota</taxon>
        <taxon>Herviviricetes</taxon>
        <taxon>Herpesvirales</taxon>
        <taxon>Orthoherpesviridae</taxon>
        <taxon>Gammaherpesvirinae</taxon>
        <taxon>Percavirus</taxon>
        <taxon>Percavirus equidgamma2</taxon>
        <taxon>Equid gammaherpesvirus 2</taxon>
    </lineage>
</organism>
<proteinExistence type="inferred from homology"/>
<reference key="1">
    <citation type="journal article" date="1995" name="J. Mol. Biol.">
        <title>The DNA sequence of equine herpesvirus 2.</title>
        <authorList>
            <person name="Telford E.A.R."/>
            <person name="Watson M.S."/>
            <person name="Aird H.C."/>
            <person name="Perry J."/>
            <person name="Davison A.J."/>
        </authorList>
    </citation>
    <scope>NUCLEOTIDE SEQUENCE [LARGE SCALE GENOMIC DNA]</scope>
</reference>